<gene>
    <name type="primary">efp</name>
    <name type="ordered locus">jhp_0163</name>
</gene>
<accession>Q9ZMQ5</accession>
<dbReference type="EMBL" id="AE001439">
    <property type="protein sequence ID" value="AAD05735.1"/>
    <property type="molecule type" value="Genomic_DNA"/>
</dbReference>
<dbReference type="PIR" id="D71967">
    <property type="entry name" value="D71967"/>
</dbReference>
<dbReference type="RefSeq" id="WP_000974266.1">
    <property type="nucleotide sequence ID" value="NZ_CP011330.1"/>
</dbReference>
<dbReference type="SMR" id="Q9ZMQ5"/>
<dbReference type="KEGG" id="hpj:jhp_0163"/>
<dbReference type="PATRIC" id="fig|85963.30.peg.859"/>
<dbReference type="eggNOG" id="COG0231">
    <property type="taxonomic scope" value="Bacteria"/>
</dbReference>
<dbReference type="UniPathway" id="UPA00345"/>
<dbReference type="Proteomes" id="UP000000804">
    <property type="component" value="Chromosome"/>
</dbReference>
<dbReference type="GO" id="GO:0005737">
    <property type="term" value="C:cytoplasm"/>
    <property type="evidence" value="ECO:0007669"/>
    <property type="project" value="UniProtKB-SubCell"/>
</dbReference>
<dbReference type="GO" id="GO:0003746">
    <property type="term" value="F:translation elongation factor activity"/>
    <property type="evidence" value="ECO:0007669"/>
    <property type="project" value="UniProtKB-UniRule"/>
</dbReference>
<dbReference type="GO" id="GO:0043043">
    <property type="term" value="P:peptide biosynthetic process"/>
    <property type="evidence" value="ECO:0007669"/>
    <property type="project" value="InterPro"/>
</dbReference>
<dbReference type="CDD" id="cd04470">
    <property type="entry name" value="S1_EF-P_repeat_1"/>
    <property type="match status" value="1"/>
</dbReference>
<dbReference type="CDD" id="cd05794">
    <property type="entry name" value="S1_EF-P_repeat_2"/>
    <property type="match status" value="1"/>
</dbReference>
<dbReference type="FunFam" id="2.30.30.30:FF:000003">
    <property type="entry name" value="Elongation factor P"/>
    <property type="match status" value="1"/>
</dbReference>
<dbReference type="FunFam" id="2.40.50.140:FF:000004">
    <property type="entry name" value="Elongation factor P"/>
    <property type="match status" value="1"/>
</dbReference>
<dbReference type="FunFam" id="2.40.50.140:FF:000009">
    <property type="entry name" value="Elongation factor P"/>
    <property type="match status" value="1"/>
</dbReference>
<dbReference type="Gene3D" id="2.30.30.30">
    <property type="match status" value="1"/>
</dbReference>
<dbReference type="Gene3D" id="2.40.50.140">
    <property type="entry name" value="Nucleic acid-binding proteins"/>
    <property type="match status" value="2"/>
</dbReference>
<dbReference type="HAMAP" id="MF_00141">
    <property type="entry name" value="EF_P"/>
    <property type="match status" value="1"/>
</dbReference>
<dbReference type="InterPro" id="IPR015365">
    <property type="entry name" value="Elong-fact-P_C"/>
</dbReference>
<dbReference type="InterPro" id="IPR012340">
    <property type="entry name" value="NA-bd_OB-fold"/>
</dbReference>
<dbReference type="InterPro" id="IPR014722">
    <property type="entry name" value="Rib_uL2_dom2"/>
</dbReference>
<dbReference type="InterPro" id="IPR020599">
    <property type="entry name" value="Transl_elong_fac_P/YeiP"/>
</dbReference>
<dbReference type="InterPro" id="IPR013185">
    <property type="entry name" value="Transl_elong_KOW-like"/>
</dbReference>
<dbReference type="InterPro" id="IPR001059">
    <property type="entry name" value="Transl_elong_P/YeiP_cen"/>
</dbReference>
<dbReference type="InterPro" id="IPR013852">
    <property type="entry name" value="Transl_elong_P/YeiP_CS"/>
</dbReference>
<dbReference type="InterPro" id="IPR011768">
    <property type="entry name" value="Transl_elongation_fac_P"/>
</dbReference>
<dbReference type="InterPro" id="IPR008991">
    <property type="entry name" value="Translation_prot_SH3-like_sf"/>
</dbReference>
<dbReference type="NCBIfam" id="TIGR00038">
    <property type="entry name" value="efp"/>
    <property type="match status" value="1"/>
</dbReference>
<dbReference type="NCBIfam" id="NF001810">
    <property type="entry name" value="PRK00529.1"/>
    <property type="match status" value="1"/>
</dbReference>
<dbReference type="PANTHER" id="PTHR30053">
    <property type="entry name" value="ELONGATION FACTOR P"/>
    <property type="match status" value="1"/>
</dbReference>
<dbReference type="PANTHER" id="PTHR30053:SF12">
    <property type="entry name" value="ELONGATION FACTOR P (EF-P) FAMILY PROTEIN"/>
    <property type="match status" value="1"/>
</dbReference>
<dbReference type="Pfam" id="PF01132">
    <property type="entry name" value="EFP"/>
    <property type="match status" value="1"/>
</dbReference>
<dbReference type="Pfam" id="PF08207">
    <property type="entry name" value="EFP_N"/>
    <property type="match status" value="1"/>
</dbReference>
<dbReference type="Pfam" id="PF09285">
    <property type="entry name" value="Elong-fact-P_C"/>
    <property type="match status" value="1"/>
</dbReference>
<dbReference type="PIRSF" id="PIRSF005901">
    <property type="entry name" value="EF-P"/>
    <property type="match status" value="1"/>
</dbReference>
<dbReference type="SMART" id="SM01185">
    <property type="entry name" value="EFP"/>
    <property type="match status" value="1"/>
</dbReference>
<dbReference type="SMART" id="SM00841">
    <property type="entry name" value="Elong-fact-P_C"/>
    <property type="match status" value="1"/>
</dbReference>
<dbReference type="SUPFAM" id="SSF50249">
    <property type="entry name" value="Nucleic acid-binding proteins"/>
    <property type="match status" value="2"/>
</dbReference>
<dbReference type="SUPFAM" id="SSF50104">
    <property type="entry name" value="Translation proteins SH3-like domain"/>
    <property type="match status" value="1"/>
</dbReference>
<dbReference type="PROSITE" id="PS01275">
    <property type="entry name" value="EFP"/>
    <property type="match status" value="1"/>
</dbReference>
<keyword id="KW-0963">Cytoplasm</keyword>
<keyword id="KW-0251">Elongation factor</keyword>
<keyword id="KW-0648">Protein biosynthesis</keyword>
<evidence type="ECO:0000250" key="1"/>
<evidence type="ECO:0000305" key="2"/>
<proteinExistence type="inferred from homology"/>
<comment type="function">
    <text evidence="1">Involved in peptide bond synthesis. Stimulates efficient translation and peptide-bond synthesis on native or reconstituted 70S ribosomes in vitro. Probably functions indirectly by altering the affinity of the ribosome for aminoacyl-tRNA, thus increasing their reactivity as acceptors for peptidyl transferase (By similarity).</text>
</comment>
<comment type="pathway">
    <text>Protein biosynthesis; polypeptide chain elongation.</text>
</comment>
<comment type="subcellular location">
    <subcellularLocation>
        <location evidence="1">Cytoplasm</location>
    </subcellularLocation>
</comment>
<comment type="similarity">
    <text evidence="2">Belongs to the elongation factor P family.</text>
</comment>
<organism>
    <name type="scientific">Helicobacter pylori (strain J99 / ATCC 700824)</name>
    <name type="common">Campylobacter pylori J99</name>
    <dbReference type="NCBI Taxonomy" id="85963"/>
    <lineage>
        <taxon>Bacteria</taxon>
        <taxon>Pseudomonadati</taxon>
        <taxon>Campylobacterota</taxon>
        <taxon>Epsilonproteobacteria</taxon>
        <taxon>Campylobacterales</taxon>
        <taxon>Helicobacteraceae</taxon>
        <taxon>Helicobacter</taxon>
    </lineage>
</organism>
<name>EFP_HELPJ</name>
<reference key="1">
    <citation type="journal article" date="1999" name="Nature">
        <title>Genomic sequence comparison of two unrelated isolates of the human gastric pathogen Helicobacter pylori.</title>
        <authorList>
            <person name="Alm R.A."/>
            <person name="Ling L.-S.L."/>
            <person name="Moir D.T."/>
            <person name="King B.L."/>
            <person name="Brown E.D."/>
            <person name="Doig P.C."/>
            <person name="Smith D.R."/>
            <person name="Noonan B."/>
            <person name="Guild B.C."/>
            <person name="deJonge B.L."/>
            <person name="Carmel G."/>
            <person name="Tummino P.J."/>
            <person name="Caruso A."/>
            <person name="Uria-Nickelsen M."/>
            <person name="Mills D.M."/>
            <person name="Ives C."/>
            <person name="Gibson R."/>
            <person name="Merberg D."/>
            <person name="Mills S.D."/>
            <person name="Jiang Q."/>
            <person name="Taylor D.E."/>
            <person name="Vovis G.F."/>
            <person name="Trust T.J."/>
        </authorList>
    </citation>
    <scope>NUCLEOTIDE SEQUENCE [LARGE SCALE GENOMIC DNA]</scope>
    <source>
        <strain>J99 / ATCC 700824</strain>
    </source>
</reference>
<feature type="chain" id="PRO_0000094261" description="Elongation factor P">
    <location>
        <begin position="1"/>
        <end position="187"/>
    </location>
</feature>
<protein>
    <recommendedName>
        <fullName>Elongation factor P</fullName>
        <shortName>EF-P</shortName>
    </recommendedName>
</protein>
<sequence length="187" mass="20776">MAIGMSELKKGLKIELGGVPYRIVEYQHVKPGKGAAFVRAKIKSFLDGKVIEKTFHAGDKCEEPNLVEKTMQYLYHDGDTYQFMDIESYEQIALNDSQVGEASKWMLDGMQVQVLLHNDKAISVDVPQVVALKIVETAPNFKGDTSSASKKPATLETGAVVQVPFHVLEGETIKVNTETEEYLEKVK</sequence>